<organism>
    <name type="scientific">Methanoregula boonei (strain DSM 21154 / JCM 14090 / 6A8)</name>
    <dbReference type="NCBI Taxonomy" id="456442"/>
    <lineage>
        <taxon>Archaea</taxon>
        <taxon>Methanobacteriati</taxon>
        <taxon>Methanobacteriota</taxon>
        <taxon>Stenosarchaea group</taxon>
        <taxon>Methanomicrobia</taxon>
        <taxon>Methanomicrobiales</taxon>
        <taxon>Methanoregulaceae</taxon>
        <taxon>Methanoregula</taxon>
    </lineage>
</organism>
<protein>
    <recommendedName>
        <fullName evidence="1">Small ribosomal subunit protein uS8</fullName>
    </recommendedName>
    <alternativeName>
        <fullName evidence="2">30S ribosomal protein S8</fullName>
    </alternativeName>
</protein>
<accession>A7I5Q4</accession>
<proteinExistence type="inferred from homology"/>
<feature type="chain" id="PRO_1000051785" description="Small ribosomal subunit protein uS8">
    <location>
        <begin position="1"/>
        <end position="130"/>
    </location>
</feature>
<dbReference type="EMBL" id="CP000780">
    <property type="protein sequence ID" value="ABS55065.1"/>
    <property type="molecule type" value="Genomic_DNA"/>
</dbReference>
<dbReference type="RefSeq" id="WP_012106086.1">
    <property type="nucleotide sequence ID" value="NC_009712.1"/>
</dbReference>
<dbReference type="SMR" id="A7I5Q4"/>
<dbReference type="STRING" id="456442.Mboo_0547"/>
<dbReference type="GeneID" id="5412241"/>
<dbReference type="KEGG" id="mbn:Mboo_0547"/>
<dbReference type="eggNOG" id="arCOG04091">
    <property type="taxonomic scope" value="Archaea"/>
</dbReference>
<dbReference type="HOGENOM" id="CLU_098428_1_1_2"/>
<dbReference type="OrthoDB" id="5670at2157"/>
<dbReference type="Proteomes" id="UP000002408">
    <property type="component" value="Chromosome"/>
</dbReference>
<dbReference type="GO" id="GO:1990904">
    <property type="term" value="C:ribonucleoprotein complex"/>
    <property type="evidence" value="ECO:0007669"/>
    <property type="project" value="UniProtKB-KW"/>
</dbReference>
<dbReference type="GO" id="GO:0005840">
    <property type="term" value="C:ribosome"/>
    <property type="evidence" value="ECO:0007669"/>
    <property type="project" value="UniProtKB-KW"/>
</dbReference>
<dbReference type="GO" id="GO:0019843">
    <property type="term" value="F:rRNA binding"/>
    <property type="evidence" value="ECO:0007669"/>
    <property type="project" value="UniProtKB-UniRule"/>
</dbReference>
<dbReference type="GO" id="GO:0003735">
    <property type="term" value="F:structural constituent of ribosome"/>
    <property type="evidence" value="ECO:0007669"/>
    <property type="project" value="InterPro"/>
</dbReference>
<dbReference type="GO" id="GO:0006412">
    <property type="term" value="P:translation"/>
    <property type="evidence" value="ECO:0007669"/>
    <property type="project" value="UniProtKB-UniRule"/>
</dbReference>
<dbReference type="FunFam" id="3.30.1490.10:FF:000002">
    <property type="entry name" value="40S ribosomal protein S15a"/>
    <property type="match status" value="1"/>
</dbReference>
<dbReference type="Gene3D" id="3.30.1370.30">
    <property type="match status" value="1"/>
</dbReference>
<dbReference type="Gene3D" id="3.30.1490.10">
    <property type="match status" value="1"/>
</dbReference>
<dbReference type="HAMAP" id="MF_01302_A">
    <property type="entry name" value="Ribosomal_uS8_A"/>
    <property type="match status" value="1"/>
</dbReference>
<dbReference type="InterPro" id="IPR000630">
    <property type="entry name" value="Ribosomal_uS8"/>
</dbReference>
<dbReference type="InterPro" id="IPR047863">
    <property type="entry name" value="Ribosomal_uS8_CS"/>
</dbReference>
<dbReference type="InterPro" id="IPR035987">
    <property type="entry name" value="Ribosomal_uS8_sf"/>
</dbReference>
<dbReference type="NCBIfam" id="NF003115">
    <property type="entry name" value="PRK04034.1"/>
    <property type="match status" value="1"/>
</dbReference>
<dbReference type="PANTHER" id="PTHR11758">
    <property type="entry name" value="40S RIBOSOMAL PROTEIN S15A"/>
    <property type="match status" value="1"/>
</dbReference>
<dbReference type="Pfam" id="PF00410">
    <property type="entry name" value="Ribosomal_S8"/>
    <property type="match status" value="1"/>
</dbReference>
<dbReference type="SUPFAM" id="SSF56047">
    <property type="entry name" value="Ribosomal protein S8"/>
    <property type="match status" value="1"/>
</dbReference>
<dbReference type="PROSITE" id="PS00053">
    <property type="entry name" value="RIBOSOMAL_S8"/>
    <property type="match status" value="1"/>
</dbReference>
<gene>
    <name evidence="1" type="primary">rps8</name>
    <name type="ordered locus">Mboo_0547</name>
</gene>
<comment type="function">
    <text evidence="1">One of the primary rRNA binding proteins, it binds directly to 16S rRNA central domain where it helps coordinate assembly of the platform of the 30S subunit.</text>
</comment>
<comment type="subunit">
    <text evidence="1">Part of the 30S ribosomal subunit.</text>
</comment>
<comment type="similarity">
    <text evidence="1">Belongs to the universal ribosomal protein uS8 family.</text>
</comment>
<evidence type="ECO:0000255" key="1">
    <source>
        <dbReference type="HAMAP-Rule" id="MF_01302"/>
    </source>
</evidence>
<evidence type="ECO:0000305" key="2"/>
<sequence>MTRLNTIADGMSALKNAGDTGKSEVTIEPASKLLGAMLRIMQDAGYIAGFEFIEDGRGGQLKVHLTGKINKCGAICPRFSVQLDEMEYWEKQYLPGKNFGLMILSTSHGVMSHVQARREGIGGELLGYVY</sequence>
<keyword id="KW-1185">Reference proteome</keyword>
<keyword id="KW-0687">Ribonucleoprotein</keyword>
<keyword id="KW-0689">Ribosomal protein</keyword>
<keyword id="KW-0694">RNA-binding</keyword>
<keyword id="KW-0699">rRNA-binding</keyword>
<reference key="1">
    <citation type="journal article" date="2015" name="Microbiology">
        <title>Genome of Methanoregula boonei 6A8 reveals adaptations to oligotrophic peatland environments.</title>
        <authorList>
            <person name="Braeuer S."/>
            <person name="Cadillo-Quiroz H."/>
            <person name="Kyrpides N."/>
            <person name="Woyke T."/>
            <person name="Goodwin L."/>
            <person name="Detter C."/>
            <person name="Podell S."/>
            <person name="Yavitt J.B."/>
            <person name="Zinder S.H."/>
        </authorList>
    </citation>
    <scope>NUCLEOTIDE SEQUENCE [LARGE SCALE GENOMIC DNA]</scope>
    <source>
        <strain>DSM 21154 / JCM 14090 / 6A8</strain>
    </source>
</reference>
<name>RS8_METB6</name>